<dbReference type="EC" id="4.2.3.68"/>
<dbReference type="EC" id="4.2.3.84"/>
<dbReference type="EC" id="4.2.3.85"/>
<dbReference type="EMBL" id="AB247334">
    <property type="protein sequence ID" value="BAG12021.1"/>
    <property type="molecule type" value="mRNA"/>
</dbReference>
<dbReference type="EMBL" id="AB263738">
    <property type="protein sequence ID" value="BAG12022.1"/>
    <property type="molecule type" value="Genomic_DNA"/>
</dbReference>
<dbReference type="SMR" id="B1B1U4"/>
<dbReference type="KEGG" id="ag:BAG12021"/>
<dbReference type="BioCyc" id="MetaCyc:MONOMER-14903"/>
<dbReference type="BRENDA" id="4.2.3.68">
    <property type="organism ID" value="12510"/>
</dbReference>
<dbReference type="BRENDA" id="4.2.3.84">
    <property type="organism ID" value="12510"/>
</dbReference>
<dbReference type="BRENDA" id="4.2.3.85">
    <property type="organism ID" value="12510"/>
</dbReference>
<dbReference type="UniPathway" id="UPA00213"/>
<dbReference type="GO" id="GO:0005737">
    <property type="term" value="C:cytoplasm"/>
    <property type="evidence" value="ECO:0007669"/>
    <property type="project" value="UniProtKB-SubCell"/>
</dbReference>
<dbReference type="GO" id="GO:0000287">
    <property type="term" value="F:magnesium ion binding"/>
    <property type="evidence" value="ECO:0007669"/>
    <property type="project" value="InterPro"/>
</dbReference>
<dbReference type="GO" id="GO:0010333">
    <property type="term" value="F:terpene synthase activity"/>
    <property type="evidence" value="ECO:0007669"/>
    <property type="project" value="InterPro"/>
</dbReference>
<dbReference type="GO" id="GO:0006952">
    <property type="term" value="P:defense response"/>
    <property type="evidence" value="ECO:0007669"/>
    <property type="project" value="UniProtKB-KW"/>
</dbReference>
<dbReference type="GO" id="GO:0016102">
    <property type="term" value="P:diterpenoid biosynthetic process"/>
    <property type="evidence" value="ECO:0007669"/>
    <property type="project" value="InterPro"/>
</dbReference>
<dbReference type="CDD" id="cd00684">
    <property type="entry name" value="Terpene_cyclase_plant_C1"/>
    <property type="match status" value="1"/>
</dbReference>
<dbReference type="FunFam" id="1.10.600.10:FF:000007">
    <property type="entry name" value="Isoprene synthase, chloroplastic"/>
    <property type="match status" value="1"/>
</dbReference>
<dbReference type="FunFam" id="1.50.10.130:FF:000001">
    <property type="entry name" value="Isoprene synthase, chloroplastic"/>
    <property type="match status" value="1"/>
</dbReference>
<dbReference type="Gene3D" id="1.10.600.10">
    <property type="entry name" value="Farnesyl Diphosphate Synthase"/>
    <property type="match status" value="1"/>
</dbReference>
<dbReference type="Gene3D" id="1.50.10.130">
    <property type="entry name" value="Terpene synthase, N-terminal domain"/>
    <property type="match status" value="1"/>
</dbReference>
<dbReference type="InterPro" id="IPR008949">
    <property type="entry name" value="Isoprenoid_synthase_dom_sf"/>
</dbReference>
<dbReference type="InterPro" id="IPR034741">
    <property type="entry name" value="Terpene_cyclase-like_1_C"/>
</dbReference>
<dbReference type="InterPro" id="IPR044814">
    <property type="entry name" value="Terpene_cyclase_plant_C1"/>
</dbReference>
<dbReference type="InterPro" id="IPR001906">
    <property type="entry name" value="Terpene_synth_N"/>
</dbReference>
<dbReference type="InterPro" id="IPR036965">
    <property type="entry name" value="Terpene_synth_N_sf"/>
</dbReference>
<dbReference type="InterPro" id="IPR050148">
    <property type="entry name" value="Terpene_synthase-like"/>
</dbReference>
<dbReference type="InterPro" id="IPR005630">
    <property type="entry name" value="Terpene_synthase_metal-bd"/>
</dbReference>
<dbReference type="InterPro" id="IPR008930">
    <property type="entry name" value="Terpenoid_cyclase/PrenylTrfase"/>
</dbReference>
<dbReference type="PANTHER" id="PTHR31225:SF93">
    <property type="entry name" value="ALPHA-HUMULENE_(-)-(E)-BETA-CARYOPHYLLENE SYNTHASE"/>
    <property type="match status" value="1"/>
</dbReference>
<dbReference type="PANTHER" id="PTHR31225">
    <property type="entry name" value="OS04G0344100 PROTEIN-RELATED"/>
    <property type="match status" value="1"/>
</dbReference>
<dbReference type="Pfam" id="PF01397">
    <property type="entry name" value="Terpene_synth"/>
    <property type="match status" value="1"/>
</dbReference>
<dbReference type="Pfam" id="PF03936">
    <property type="entry name" value="Terpene_synth_C"/>
    <property type="match status" value="1"/>
</dbReference>
<dbReference type="SFLD" id="SFLDS00005">
    <property type="entry name" value="Isoprenoid_Synthase_Type_I"/>
    <property type="match status" value="1"/>
</dbReference>
<dbReference type="SFLD" id="SFLDG01019">
    <property type="entry name" value="Terpene_Cyclase_Like_1_C_Termi"/>
    <property type="match status" value="1"/>
</dbReference>
<dbReference type="SUPFAM" id="SSF48239">
    <property type="entry name" value="Terpenoid cyclases/Protein prenyltransferases"/>
    <property type="match status" value="1"/>
</dbReference>
<dbReference type="SUPFAM" id="SSF48576">
    <property type="entry name" value="Terpenoid synthases"/>
    <property type="match status" value="1"/>
</dbReference>
<gene>
    <name type="primary">ZSS2</name>
</gene>
<reference key="1">
    <citation type="journal article" date="2008" name="FEBS Lett.">
        <title>Isolation and functional characterization of a beta-eudesmol synthase, a new sesquiterpene synthase from Zingiber zerumbet Smith.</title>
        <authorList>
            <person name="Yu F."/>
            <person name="Harada H."/>
            <person name="Yamasaki K."/>
            <person name="Okamoto S."/>
            <person name="Hirase S."/>
            <person name="Tanaka Y."/>
            <person name="Misawa N."/>
            <person name="Utsumi R."/>
        </authorList>
    </citation>
    <scope>NUCLEOTIDE SEQUENCE [GENOMIC DNA / MRNA]</scope>
    <scope>FUNCTION</scope>
    <scope>CATALYTIC ACTIVITY</scope>
    <scope>TISSUE SPECIFICITY</scope>
    <scope>INDUCTION</scope>
</reference>
<reference key="2">
    <citation type="journal article" date="2004" name="J. Chem. Ecol.">
        <title>Behavioral changes in workers of the leaf-cutting ant Atta sexdens rubropilosa induced by chemical components of Eucalyptus maculata leaves.</title>
        <authorList>
            <person name="Marsaro A.L."/>
            <person name="Souza R.C."/>
            <person name="Della Lucia T.M."/>
            <person name="Fernandes J.B."/>
            <person name="Silva M.F."/>
            <person name="Vieira P.C."/>
        </authorList>
    </citation>
    <scope>FUNCTION</scope>
</reference>
<evidence type="ECO:0000250" key="1"/>
<evidence type="ECO:0000269" key="2">
    <source>
    </source>
</evidence>
<evidence type="ECO:0000269" key="3">
    <source>
    </source>
</evidence>
<evidence type="ECO:0000305" key="4"/>
<feature type="chain" id="PRO_0000412250" description="Beta-eudesmol synthase">
    <location>
        <begin position="1"/>
        <end position="554"/>
    </location>
</feature>
<feature type="short sequence motif" description="DDXXD motif">
    <location>
        <begin position="305"/>
        <end position="309"/>
    </location>
</feature>
<feature type="binding site" evidence="1">
    <location>
        <position position="305"/>
    </location>
    <ligand>
        <name>Mg(2+)</name>
        <dbReference type="ChEBI" id="CHEBI:18420"/>
        <label>1</label>
    </ligand>
</feature>
<feature type="binding site" evidence="1">
    <location>
        <position position="305"/>
    </location>
    <ligand>
        <name>Mg(2+)</name>
        <dbReference type="ChEBI" id="CHEBI:18420"/>
        <label>2</label>
    </ligand>
</feature>
<feature type="binding site" evidence="1">
    <location>
        <position position="309"/>
    </location>
    <ligand>
        <name>Mg(2+)</name>
        <dbReference type="ChEBI" id="CHEBI:18420"/>
        <label>1</label>
    </ligand>
</feature>
<feature type="binding site" evidence="1">
    <location>
        <position position="309"/>
    </location>
    <ligand>
        <name>Mg(2+)</name>
        <dbReference type="ChEBI" id="CHEBI:18420"/>
        <label>2</label>
    </ligand>
</feature>
<feature type="binding site" evidence="1">
    <location>
        <position position="456"/>
    </location>
    <ligand>
        <name>Mg(2+)</name>
        <dbReference type="ChEBI" id="CHEBI:18420"/>
        <label>3</label>
    </ligand>
</feature>
<organism>
    <name type="scientific">Zingiber zerumbet</name>
    <name type="common">Shampoo ginger</name>
    <name type="synonym">Amomum zerumbet</name>
    <dbReference type="NCBI Taxonomy" id="311405"/>
    <lineage>
        <taxon>Eukaryota</taxon>
        <taxon>Viridiplantae</taxon>
        <taxon>Streptophyta</taxon>
        <taxon>Embryophyta</taxon>
        <taxon>Tracheophyta</taxon>
        <taxon>Spermatophyta</taxon>
        <taxon>Magnoliopsida</taxon>
        <taxon>Liliopsida</taxon>
        <taxon>Zingiberales</taxon>
        <taxon>Zingiberaceae</taxon>
        <taxon>Zingiber</taxon>
    </lineage>
</organism>
<sequence>MEKQSLTFDGDEEAKIDRKSSKYHPSIWGDYFIQNSSLTHAKESTQRMIKRVEELKVQVKSMFKDTSDLLQLMNLINSIQMLGLDYHFENEIDEALRLIYEVDDKSYGLYETSLRFQLLRQHGYHVSADIFNKFKDDNGSFISSLNGDAKGLLSLYNVSYLGTHGETILDEAKSFTKPQLVSLMSELEQSLAAQVSLFLELPLCRRNKILLARKYILIYQEDAMRNNVILELAKLNFNLLQSLYQEELKKISIWWNDLAFAKSLSFTRDRVVEGYYWVLTIYFEPQHSRARVICSKVFAFLSIMDDIYDNYGILEECTLLTEAIKRWNPQAIDGLPEYLKDYYLKLLKTFEEFEDELELNEKYRMLYLQDEVKALAISYLQEAKWGIERHVPSLDEHLHNSLISSGSSTVICASFVGMGEVATKEVFDWLSSFPKVVEACCVIGRLLNDIRSHELEQGRDHTASTVESYMKEHDTNVDVACEKLREIVEKAWKDLNNESLNPTKVPRLMIERIVNLSKSNEEIYKYNDTYTNSDTTMKDNISLVLVESCDYFNK</sequence>
<keyword id="KW-0963">Cytoplasm</keyword>
<keyword id="KW-0456">Lyase</keyword>
<keyword id="KW-0460">Magnesium</keyword>
<keyword id="KW-0464">Manganese</keyword>
<keyword id="KW-0479">Metal-binding</keyword>
<keyword id="KW-0611">Plant defense</keyword>
<name>TPSBE_ZINZE</name>
<protein>
    <recommendedName>
        <fullName>Beta-eudesmol synthase</fullName>
        <ecNumber>4.2.3.68</ecNumber>
    </recommendedName>
    <alternativeName>
        <fullName>10-epi-gamma-eudesmol synthase</fullName>
        <ecNumber>4.2.3.84</ecNumber>
    </alternativeName>
    <alternativeName>
        <fullName>Alpha-eudesmol synthase</fullName>
        <ecNumber>4.2.3.85</ecNumber>
    </alternativeName>
</protein>
<proteinExistence type="evidence at protein level"/>
<accession>B1B1U4</accession>
<comment type="function">
    <text evidence="2 3">Involved in the biosynthesis of beta-eudesmol, a sesquiterpene with antifungal activity and responsible for resistance of plants to ant attack. Produces mainly beta-eudesmol, but also smaller amounts of 10-epi-gamma-eudesmol, alpha-eudesmol and aristolene.</text>
</comment>
<comment type="catalytic activity">
    <reaction evidence="3">
        <text>(2E,6E)-farnesyl diphosphate + H2O = beta-eudesmol + diphosphate</text>
        <dbReference type="Rhea" id="RHEA:29495"/>
        <dbReference type="ChEBI" id="CHEBI:10417"/>
        <dbReference type="ChEBI" id="CHEBI:15377"/>
        <dbReference type="ChEBI" id="CHEBI:33019"/>
        <dbReference type="ChEBI" id="CHEBI:175763"/>
        <dbReference type="EC" id="4.2.3.68"/>
    </reaction>
</comment>
<comment type="catalytic activity">
    <reaction evidence="3">
        <text>(2E,6E)-farnesyl diphosphate + H2O = 10-epi-gamma-eudesmol + diphosphate</text>
        <dbReference type="Rhea" id="RHEA:30947"/>
        <dbReference type="ChEBI" id="CHEBI:15377"/>
        <dbReference type="ChEBI" id="CHEBI:33019"/>
        <dbReference type="ChEBI" id="CHEBI:62514"/>
        <dbReference type="ChEBI" id="CHEBI:175763"/>
        <dbReference type="EC" id="4.2.3.84"/>
    </reaction>
</comment>
<comment type="catalytic activity">
    <reaction evidence="3">
        <text>(2E,6E)-farnesyl diphosphate + H2O = alpha-eudesmol + diphosphate</text>
        <dbReference type="Rhea" id="RHEA:30951"/>
        <dbReference type="ChEBI" id="CHEBI:10278"/>
        <dbReference type="ChEBI" id="CHEBI:15377"/>
        <dbReference type="ChEBI" id="CHEBI:33019"/>
        <dbReference type="ChEBI" id="CHEBI:175763"/>
        <dbReference type="EC" id="4.2.3.85"/>
    </reaction>
</comment>
<comment type="cofactor">
    <cofactor evidence="4">
        <name>Mg(2+)</name>
        <dbReference type="ChEBI" id="CHEBI:18420"/>
    </cofactor>
    <cofactor evidence="4">
        <name>Mn(2+)</name>
        <dbReference type="ChEBI" id="CHEBI:29035"/>
    </cofactor>
    <text evidence="4">Binds 3 Mg(2+) or Mn(2+) ions per subunit.</text>
</comment>
<comment type="pathway">
    <text>Secondary metabolite biosynthesis; terpenoid biosynthesis.</text>
</comment>
<comment type="subcellular location">
    <subcellularLocation>
        <location evidence="4">Cytoplasm</location>
    </subcellularLocation>
</comment>
<comment type="tissue specificity">
    <text evidence="3">Expressed in rhizomes. Detected in stems, but not in leaves.</text>
</comment>
<comment type="induction">
    <text evidence="3">Peak of expression in summer.</text>
</comment>
<comment type="domain">
    <text evidence="1">The Asp-Asp-Xaa-Xaa-Asp/Glu (DDXXD/E) motif is important for the catalytic activity, presumably through binding to Mg(2+).</text>
</comment>
<comment type="similarity">
    <text evidence="4">Belongs to the terpene synthase family.</text>
</comment>